<sequence length="275" mass="30125">MIQFTKMHGLGNDFMVVDGVTQNVFFSPEQIRRLADRNFGIGFDQLLLVEPPYDPDLDFHYRIFNADGSEVEQCGNGARCFARFVRNKGLTNKNKIRVSTSSGKMTLRLERDGTVTVNMGVPILEPSLIPFKAKKPEKTYLLQTAQQTFLCGAASMGNPHCVLDVEDVASAAVAEIGALLTKHERFPRGVNVGFMQVINSGHIKLRVYERGAAETLACGTGACAAVVVGQIQGKLDQQVRVDLPGGTLTINWEGEGKPLWMTGPAQHVYDGQIQL</sequence>
<dbReference type="EC" id="5.1.1.7" evidence="1"/>
<dbReference type="EMBL" id="CP000681">
    <property type="protein sequence ID" value="ABP77290.1"/>
    <property type="molecule type" value="Genomic_DNA"/>
</dbReference>
<dbReference type="SMR" id="A4YBF7"/>
<dbReference type="STRING" id="319224.Sputcn32_3582"/>
<dbReference type="KEGG" id="spc:Sputcn32_3582"/>
<dbReference type="eggNOG" id="COG0253">
    <property type="taxonomic scope" value="Bacteria"/>
</dbReference>
<dbReference type="HOGENOM" id="CLU_053306_1_1_6"/>
<dbReference type="UniPathway" id="UPA00034">
    <property type="reaction ID" value="UER00025"/>
</dbReference>
<dbReference type="GO" id="GO:0005829">
    <property type="term" value="C:cytosol"/>
    <property type="evidence" value="ECO:0007669"/>
    <property type="project" value="TreeGrafter"/>
</dbReference>
<dbReference type="GO" id="GO:0008837">
    <property type="term" value="F:diaminopimelate epimerase activity"/>
    <property type="evidence" value="ECO:0007669"/>
    <property type="project" value="UniProtKB-UniRule"/>
</dbReference>
<dbReference type="GO" id="GO:0009089">
    <property type="term" value="P:lysine biosynthetic process via diaminopimelate"/>
    <property type="evidence" value="ECO:0007669"/>
    <property type="project" value="UniProtKB-UniRule"/>
</dbReference>
<dbReference type="FunFam" id="3.10.310.10:FF:000001">
    <property type="entry name" value="Diaminopimelate epimerase"/>
    <property type="match status" value="1"/>
</dbReference>
<dbReference type="FunFam" id="3.10.310.10:FF:000002">
    <property type="entry name" value="Diaminopimelate epimerase"/>
    <property type="match status" value="1"/>
</dbReference>
<dbReference type="Gene3D" id="3.10.310.10">
    <property type="entry name" value="Diaminopimelate Epimerase, Chain A, domain 1"/>
    <property type="match status" value="2"/>
</dbReference>
<dbReference type="HAMAP" id="MF_00197">
    <property type="entry name" value="DAP_epimerase"/>
    <property type="match status" value="1"/>
</dbReference>
<dbReference type="InterPro" id="IPR018510">
    <property type="entry name" value="DAP_epimerase_AS"/>
</dbReference>
<dbReference type="InterPro" id="IPR001653">
    <property type="entry name" value="DAP_epimerase_DapF"/>
</dbReference>
<dbReference type="NCBIfam" id="TIGR00652">
    <property type="entry name" value="DapF"/>
    <property type="match status" value="1"/>
</dbReference>
<dbReference type="PANTHER" id="PTHR31689:SF0">
    <property type="entry name" value="DIAMINOPIMELATE EPIMERASE"/>
    <property type="match status" value="1"/>
</dbReference>
<dbReference type="PANTHER" id="PTHR31689">
    <property type="entry name" value="DIAMINOPIMELATE EPIMERASE, CHLOROPLASTIC"/>
    <property type="match status" value="1"/>
</dbReference>
<dbReference type="Pfam" id="PF01678">
    <property type="entry name" value="DAP_epimerase"/>
    <property type="match status" value="2"/>
</dbReference>
<dbReference type="SUPFAM" id="SSF54506">
    <property type="entry name" value="Diaminopimelate epimerase-like"/>
    <property type="match status" value="1"/>
</dbReference>
<dbReference type="PROSITE" id="PS01326">
    <property type="entry name" value="DAP_EPIMERASE"/>
    <property type="match status" value="1"/>
</dbReference>
<protein>
    <recommendedName>
        <fullName evidence="1">Diaminopimelate epimerase</fullName>
        <shortName evidence="1">DAP epimerase</shortName>
        <ecNumber evidence="1">5.1.1.7</ecNumber>
    </recommendedName>
    <alternativeName>
        <fullName evidence="1">PLP-independent amino acid racemase</fullName>
    </alternativeName>
</protein>
<proteinExistence type="inferred from homology"/>
<accession>A4YBF7</accession>
<reference key="1">
    <citation type="submission" date="2007-04" db="EMBL/GenBank/DDBJ databases">
        <title>Complete sequence of Shewanella putrefaciens CN-32.</title>
        <authorList>
            <consortium name="US DOE Joint Genome Institute"/>
            <person name="Copeland A."/>
            <person name="Lucas S."/>
            <person name="Lapidus A."/>
            <person name="Barry K."/>
            <person name="Detter J.C."/>
            <person name="Glavina del Rio T."/>
            <person name="Hammon N."/>
            <person name="Israni S."/>
            <person name="Dalin E."/>
            <person name="Tice H."/>
            <person name="Pitluck S."/>
            <person name="Chain P."/>
            <person name="Malfatti S."/>
            <person name="Shin M."/>
            <person name="Vergez L."/>
            <person name="Schmutz J."/>
            <person name="Larimer F."/>
            <person name="Land M."/>
            <person name="Hauser L."/>
            <person name="Kyrpides N."/>
            <person name="Mikhailova N."/>
            <person name="Romine M.F."/>
            <person name="Fredrickson J."/>
            <person name="Tiedje J."/>
            <person name="Richardson P."/>
        </authorList>
    </citation>
    <scope>NUCLEOTIDE SEQUENCE [LARGE SCALE GENOMIC DNA]</scope>
    <source>
        <strain>CN-32 / ATCC BAA-453</strain>
    </source>
</reference>
<gene>
    <name evidence="1" type="primary">dapF</name>
    <name type="ordered locus">Sputcn32_3582</name>
</gene>
<name>DAPF_SHEPC</name>
<evidence type="ECO:0000255" key="1">
    <source>
        <dbReference type="HAMAP-Rule" id="MF_00197"/>
    </source>
</evidence>
<organism>
    <name type="scientific">Shewanella putrefaciens (strain CN-32 / ATCC BAA-453)</name>
    <dbReference type="NCBI Taxonomy" id="319224"/>
    <lineage>
        <taxon>Bacteria</taxon>
        <taxon>Pseudomonadati</taxon>
        <taxon>Pseudomonadota</taxon>
        <taxon>Gammaproteobacteria</taxon>
        <taxon>Alteromonadales</taxon>
        <taxon>Shewanellaceae</taxon>
        <taxon>Shewanella</taxon>
    </lineage>
</organism>
<feature type="chain" id="PRO_1000011965" description="Diaminopimelate epimerase">
    <location>
        <begin position="1"/>
        <end position="275"/>
    </location>
</feature>
<feature type="active site" description="Proton donor" evidence="1">
    <location>
        <position position="74"/>
    </location>
</feature>
<feature type="active site" description="Proton acceptor" evidence="1">
    <location>
        <position position="218"/>
    </location>
</feature>
<feature type="binding site" evidence="1">
    <location>
        <position position="12"/>
    </location>
    <ligand>
        <name>substrate</name>
    </ligand>
</feature>
<feature type="binding site" evidence="1">
    <location>
        <position position="45"/>
    </location>
    <ligand>
        <name>substrate</name>
    </ligand>
</feature>
<feature type="binding site" evidence="1">
    <location>
        <position position="65"/>
    </location>
    <ligand>
        <name>substrate</name>
    </ligand>
</feature>
<feature type="binding site" evidence="1">
    <location>
        <begin position="75"/>
        <end position="76"/>
    </location>
    <ligand>
        <name>substrate</name>
    </ligand>
</feature>
<feature type="binding site" evidence="1">
    <location>
        <position position="158"/>
    </location>
    <ligand>
        <name>substrate</name>
    </ligand>
</feature>
<feature type="binding site" evidence="1">
    <location>
        <position position="191"/>
    </location>
    <ligand>
        <name>substrate</name>
    </ligand>
</feature>
<feature type="binding site" evidence="1">
    <location>
        <begin position="209"/>
        <end position="210"/>
    </location>
    <ligand>
        <name>substrate</name>
    </ligand>
</feature>
<feature type="binding site" evidence="1">
    <location>
        <begin position="219"/>
        <end position="220"/>
    </location>
    <ligand>
        <name>substrate</name>
    </ligand>
</feature>
<feature type="site" description="Could be important to modulate the pK values of the two catalytic cysteine residues" evidence="1">
    <location>
        <position position="160"/>
    </location>
</feature>
<feature type="site" description="Could be important to modulate the pK values of the two catalytic cysteine residues" evidence="1">
    <location>
        <position position="209"/>
    </location>
</feature>
<feature type="site" description="Important for dimerization" evidence="1">
    <location>
        <position position="269"/>
    </location>
</feature>
<keyword id="KW-0028">Amino-acid biosynthesis</keyword>
<keyword id="KW-0963">Cytoplasm</keyword>
<keyword id="KW-0413">Isomerase</keyword>
<keyword id="KW-0457">Lysine biosynthesis</keyword>
<comment type="function">
    <text evidence="1">Catalyzes the stereoinversion of LL-2,6-diaminopimelate (L,L-DAP) to meso-diaminopimelate (meso-DAP), a precursor of L-lysine and an essential component of the bacterial peptidoglycan.</text>
</comment>
<comment type="catalytic activity">
    <reaction evidence="1">
        <text>(2S,6S)-2,6-diaminopimelate = meso-2,6-diaminopimelate</text>
        <dbReference type="Rhea" id="RHEA:15393"/>
        <dbReference type="ChEBI" id="CHEBI:57609"/>
        <dbReference type="ChEBI" id="CHEBI:57791"/>
        <dbReference type="EC" id="5.1.1.7"/>
    </reaction>
</comment>
<comment type="pathway">
    <text evidence="1">Amino-acid biosynthesis; L-lysine biosynthesis via DAP pathway; DL-2,6-diaminopimelate from LL-2,6-diaminopimelate: step 1/1.</text>
</comment>
<comment type="subunit">
    <text evidence="1">Homodimer.</text>
</comment>
<comment type="subcellular location">
    <subcellularLocation>
        <location evidence="1">Cytoplasm</location>
    </subcellularLocation>
</comment>
<comment type="similarity">
    <text evidence="1">Belongs to the diaminopimelate epimerase family.</text>
</comment>